<keyword id="KW-1003">Cell membrane</keyword>
<keyword id="KW-0449">Lipoprotein</keyword>
<keyword id="KW-0472">Membrane</keyword>
<keyword id="KW-0564">Palmitate</keyword>
<keyword id="KW-0592">Phosphate transport</keyword>
<keyword id="KW-1185">Reference proteome</keyword>
<keyword id="KW-0732">Signal</keyword>
<keyword id="KW-0813">Transport</keyword>
<comment type="function">
    <text evidence="3">Part of the ABC transporter complex PhnCDE involved in phosphate import. Responsible for phosphate binding.</text>
</comment>
<comment type="subunit">
    <text evidence="1">The complex is composed of two ATP-binding proteins (PhnC), two transmembrane proteins (PhnE) and a solute-binding protein (PhnD).</text>
</comment>
<comment type="subcellular location">
    <subcellularLocation>
        <location evidence="2">Cell membrane</location>
        <topology evidence="2">Lipid-anchor</topology>
    </subcellularLocation>
</comment>
<comment type="induction">
    <text evidence="3">By phosphate-limited conditions, via derepression by PhnF, and probably also via the two-component regulatory system senX3/regX3.</text>
</comment>
<comment type="similarity">
    <text evidence="4">Belongs to the phosphate/phosphite/phosphonate binding protein family.</text>
</comment>
<comment type="sequence caution" evidence="4">
    <conflict type="erroneous initiation">
        <sequence resource="EMBL-CDS" id="AFP37113"/>
    </conflict>
    <text>Extended N-terminus.</text>
</comment>
<organism>
    <name type="scientific">Mycolicibacterium smegmatis (strain ATCC 700084 / mc(2)155)</name>
    <name type="common">Mycobacterium smegmatis</name>
    <dbReference type="NCBI Taxonomy" id="246196"/>
    <lineage>
        <taxon>Bacteria</taxon>
        <taxon>Bacillati</taxon>
        <taxon>Actinomycetota</taxon>
        <taxon>Actinomycetes</taxon>
        <taxon>Mycobacteriales</taxon>
        <taxon>Mycobacteriaceae</taxon>
        <taxon>Mycolicibacterium</taxon>
    </lineage>
</organism>
<accession>A0QQ71</accession>
<accession>I7FDW7</accession>
<name>PHND_MYCS2</name>
<evidence type="ECO:0000250" key="1"/>
<evidence type="ECO:0000255" key="2">
    <source>
        <dbReference type="PROSITE-ProRule" id="PRU00303"/>
    </source>
</evidence>
<evidence type="ECO:0000269" key="3">
    <source>
    </source>
</evidence>
<evidence type="ECO:0000305" key="4"/>
<sequence length="321" mass="33385">MKIRAHHKIATAAACVALLASACSGSDKPQSTTAEGFPETITLAAIPAENSSDLKASYDPLIKMLEKQTGSKVEFVQASDYAGVVEGMIAGNVDLAFFGPFAYVVAGVNGAKMTPLGAVIKDEGGAPGYQSYGLARADEDNINGLKDFAGKKVCFVDPGSTSGFLYPTAGLIEEGVVKSGSEADISAAMSPIFAGGHDSSALAIANGDCDAGFAFDTMVDKTMIDKGDLKPGQLKTVWKSDMIAGSVFAANDALGPEVIDKLKTMFAQDANVKSFEEEGFCEGDACRITDERAWGVVPVTDADYDGVRHVCDVTGSEKCKG</sequence>
<feature type="signal peptide" evidence="2">
    <location>
        <begin position="1"/>
        <end position="22"/>
    </location>
</feature>
<feature type="chain" id="PRO_0000357470" description="Phosphate-import protein PhnD">
    <location>
        <begin position="23"/>
        <end position="321"/>
    </location>
</feature>
<feature type="lipid moiety-binding region" description="N-palmitoyl cysteine" evidence="2">
    <location>
        <position position="23"/>
    </location>
</feature>
<feature type="lipid moiety-binding region" description="S-diacylglycerol cysteine" evidence="2">
    <location>
        <position position="23"/>
    </location>
</feature>
<dbReference type="EMBL" id="CP000480">
    <property type="protein sequence ID" value="ABK73977.1"/>
    <property type="molecule type" value="Genomic_DNA"/>
</dbReference>
<dbReference type="EMBL" id="CP001663">
    <property type="protein sequence ID" value="AFP37113.1"/>
    <property type="status" value="ALT_INIT"/>
    <property type="molecule type" value="Genomic_DNA"/>
</dbReference>
<dbReference type="RefSeq" id="WP_003892069.1">
    <property type="nucleotide sequence ID" value="NZ_SIJM01000009.1"/>
</dbReference>
<dbReference type="RefSeq" id="YP_885059.1">
    <property type="nucleotide sequence ID" value="NC_008596.1"/>
</dbReference>
<dbReference type="SMR" id="A0QQ71"/>
<dbReference type="STRING" id="246196.MSMEG_0649"/>
<dbReference type="TCDB" id="3.A.1.9.2">
    <property type="family name" value="the atp-binding cassette (abc) superfamily"/>
</dbReference>
<dbReference type="PaxDb" id="246196-MSMEI_0632"/>
<dbReference type="KEGG" id="msb:LJ00_03220"/>
<dbReference type="KEGG" id="msg:MSMEI_0632"/>
<dbReference type="KEGG" id="msm:MSMEG_0649"/>
<dbReference type="PATRIC" id="fig|246196.19.peg.645"/>
<dbReference type="eggNOG" id="COG3221">
    <property type="taxonomic scope" value="Bacteria"/>
</dbReference>
<dbReference type="OrthoDB" id="9764656at2"/>
<dbReference type="Proteomes" id="UP000000757">
    <property type="component" value="Chromosome"/>
</dbReference>
<dbReference type="Proteomes" id="UP000006158">
    <property type="component" value="Chromosome"/>
</dbReference>
<dbReference type="GO" id="GO:0043190">
    <property type="term" value="C:ATP-binding cassette (ABC) transporter complex"/>
    <property type="evidence" value="ECO:0007669"/>
    <property type="project" value="InterPro"/>
</dbReference>
<dbReference type="GO" id="GO:0006817">
    <property type="term" value="P:phosphate ion transport"/>
    <property type="evidence" value="ECO:0007669"/>
    <property type="project" value="UniProtKB-KW"/>
</dbReference>
<dbReference type="GO" id="GO:0055085">
    <property type="term" value="P:transmembrane transport"/>
    <property type="evidence" value="ECO:0007669"/>
    <property type="project" value="InterPro"/>
</dbReference>
<dbReference type="CDD" id="cd01071">
    <property type="entry name" value="PBP2_PhnD_like"/>
    <property type="match status" value="1"/>
</dbReference>
<dbReference type="Gene3D" id="3.40.190.10">
    <property type="entry name" value="Periplasmic binding protein-like II"/>
    <property type="match status" value="2"/>
</dbReference>
<dbReference type="InterPro" id="IPR005770">
    <property type="entry name" value="PhnD"/>
</dbReference>
<dbReference type="NCBIfam" id="TIGR01098">
    <property type="entry name" value="3A0109s03R"/>
    <property type="match status" value="1"/>
</dbReference>
<dbReference type="PANTHER" id="PTHR35841">
    <property type="entry name" value="PHOSPHONATES-BINDING PERIPLASMIC PROTEIN"/>
    <property type="match status" value="1"/>
</dbReference>
<dbReference type="PANTHER" id="PTHR35841:SF1">
    <property type="entry name" value="PHOSPHONATES-BINDING PERIPLASMIC PROTEIN"/>
    <property type="match status" value="1"/>
</dbReference>
<dbReference type="Pfam" id="PF12974">
    <property type="entry name" value="Phosphonate-bd"/>
    <property type="match status" value="1"/>
</dbReference>
<dbReference type="SUPFAM" id="SSF53850">
    <property type="entry name" value="Periplasmic binding protein-like II"/>
    <property type="match status" value="1"/>
</dbReference>
<dbReference type="PROSITE" id="PS51257">
    <property type="entry name" value="PROKAR_LIPOPROTEIN"/>
    <property type="match status" value="1"/>
</dbReference>
<protein>
    <recommendedName>
        <fullName>Phosphate-import protein PhnD</fullName>
    </recommendedName>
</protein>
<proteinExistence type="evidence at protein level"/>
<reference key="1">
    <citation type="submission" date="2006-10" db="EMBL/GenBank/DDBJ databases">
        <authorList>
            <person name="Fleischmann R.D."/>
            <person name="Dodson R.J."/>
            <person name="Haft D.H."/>
            <person name="Merkel J.S."/>
            <person name="Nelson W.C."/>
            <person name="Fraser C.M."/>
        </authorList>
    </citation>
    <scope>NUCLEOTIDE SEQUENCE [LARGE SCALE GENOMIC DNA]</scope>
    <source>
        <strain>ATCC 700084 / mc(2)155</strain>
    </source>
</reference>
<reference key="2">
    <citation type="journal article" date="2007" name="Genome Biol.">
        <title>Interrupted coding sequences in Mycobacterium smegmatis: authentic mutations or sequencing errors?</title>
        <authorList>
            <person name="Deshayes C."/>
            <person name="Perrodou E."/>
            <person name="Gallien S."/>
            <person name="Euphrasie D."/>
            <person name="Schaeffer C."/>
            <person name="Van-Dorsselaer A."/>
            <person name="Poch O."/>
            <person name="Lecompte O."/>
            <person name="Reyrat J.-M."/>
        </authorList>
    </citation>
    <scope>NUCLEOTIDE SEQUENCE [LARGE SCALE GENOMIC DNA]</scope>
    <source>
        <strain>ATCC 700084 / mc(2)155</strain>
    </source>
</reference>
<reference key="3">
    <citation type="journal article" date="2009" name="Genome Res.">
        <title>Ortho-proteogenomics: multiple proteomes investigation through orthology and a new MS-based protocol.</title>
        <authorList>
            <person name="Gallien S."/>
            <person name="Perrodou E."/>
            <person name="Carapito C."/>
            <person name="Deshayes C."/>
            <person name="Reyrat J.-M."/>
            <person name="Van Dorsselaer A."/>
            <person name="Poch O."/>
            <person name="Schaeffer C."/>
            <person name="Lecompte O."/>
        </authorList>
    </citation>
    <scope>NUCLEOTIDE SEQUENCE [LARGE SCALE GENOMIC DNA]</scope>
    <source>
        <strain>ATCC 700084 / mc(2)155</strain>
    </source>
</reference>
<reference key="4">
    <citation type="journal article" date="2005" name="Microbiology">
        <title>Mutants of Mycobacterium smegmatis unable to grow at acidic pH in the presence of the protonophore carbonyl cyanide m-chlorophenylhydrazone.</title>
        <authorList>
            <person name="Tran S.L."/>
            <person name="Rao M."/>
            <person name="Simmers C."/>
            <person name="Gebhard S."/>
            <person name="Olsson K."/>
            <person name="Cook G.M."/>
        </authorList>
    </citation>
    <scope>INVOLVEMENT IN PHOSPHATE ASSIMILATION</scope>
    <scope>GENE NAME</scope>
</reference>
<reference key="5">
    <citation type="journal article" date="2006" name="Microbiology">
        <title>The Phn system of Mycobacterium smegmatis: a second high-affinity ABC-transporter for phosphate.</title>
        <authorList>
            <person name="Gebhard S."/>
            <person name="Tran S.L."/>
            <person name="Cook G.M."/>
        </authorList>
    </citation>
    <scope>FUNCTION IN PHOSPHATE TRANSPORT</scope>
    <scope>INDUCTION</scope>
</reference>
<gene>
    <name type="primary">phnD</name>
    <name type="ordered locus">MSMEG_0649</name>
    <name type="ordered locus">MSMEI_0632</name>
</gene>